<reference key="1">
    <citation type="journal article" date="2006" name="Genome Res.">
        <title>Skewed genomic variability in strains of the toxigenic bacterial pathogen, Clostridium perfringens.</title>
        <authorList>
            <person name="Myers G.S.A."/>
            <person name="Rasko D.A."/>
            <person name="Cheung J.K."/>
            <person name="Ravel J."/>
            <person name="Seshadri R."/>
            <person name="DeBoy R.T."/>
            <person name="Ren Q."/>
            <person name="Varga J."/>
            <person name="Awad M.M."/>
            <person name="Brinkac L.M."/>
            <person name="Daugherty S.C."/>
            <person name="Haft D.H."/>
            <person name="Dodson R.J."/>
            <person name="Madupu R."/>
            <person name="Nelson W.C."/>
            <person name="Rosovitz M.J."/>
            <person name="Sullivan S.A."/>
            <person name="Khouri H."/>
            <person name="Dimitrov G.I."/>
            <person name="Watkins K.L."/>
            <person name="Mulligan S."/>
            <person name="Benton J."/>
            <person name="Radune D."/>
            <person name="Fisher D.J."/>
            <person name="Atkins H.S."/>
            <person name="Hiscox T."/>
            <person name="Jost B.H."/>
            <person name="Billington S.J."/>
            <person name="Songer J.G."/>
            <person name="McClane B.A."/>
            <person name="Titball R.W."/>
            <person name="Rood J.I."/>
            <person name="Melville S.B."/>
            <person name="Paulsen I.T."/>
        </authorList>
    </citation>
    <scope>NUCLEOTIDE SEQUENCE [LARGE SCALE GENOMIC DNA]</scope>
    <source>
        <strain>ATCC 13124 / DSM 756 / JCM 1290 / NCIMB 6125 / NCTC 8237 / S 107 / Type A</strain>
    </source>
</reference>
<feature type="chain" id="PRO_1000068266" description="Peptide methionine sulfoxide reductase MsrB">
    <location>
        <begin position="1"/>
        <end position="147"/>
    </location>
</feature>
<feature type="domain" description="MsrB" evidence="2">
    <location>
        <begin position="8"/>
        <end position="131"/>
    </location>
</feature>
<feature type="active site" description="Nucleophile" evidence="2">
    <location>
        <position position="120"/>
    </location>
</feature>
<accession>Q0TPZ6</accession>
<organism>
    <name type="scientific">Clostridium perfringens (strain ATCC 13124 / DSM 756 / JCM 1290 / NCIMB 6125 / NCTC 8237 / Type A)</name>
    <dbReference type="NCBI Taxonomy" id="195103"/>
    <lineage>
        <taxon>Bacteria</taxon>
        <taxon>Bacillati</taxon>
        <taxon>Bacillota</taxon>
        <taxon>Clostridia</taxon>
        <taxon>Eubacteriales</taxon>
        <taxon>Clostridiaceae</taxon>
        <taxon>Clostridium</taxon>
    </lineage>
</organism>
<dbReference type="EC" id="1.8.4.12" evidence="1"/>
<dbReference type="EMBL" id="CP000246">
    <property type="protein sequence ID" value="ABG83302.1"/>
    <property type="molecule type" value="Genomic_DNA"/>
</dbReference>
<dbReference type="RefSeq" id="WP_003468018.1">
    <property type="nucleotide sequence ID" value="NC_008261.1"/>
</dbReference>
<dbReference type="SMR" id="Q0TPZ6"/>
<dbReference type="STRING" id="195103.CPF_1860"/>
<dbReference type="PaxDb" id="195103-CPF_1860"/>
<dbReference type="KEGG" id="cpf:CPF_1860"/>
<dbReference type="eggNOG" id="COG0229">
    <property type="taxonomic scope" value="Bacteria"/>
</dbReference>
<dbReference type="HOGENOM" id="CLU_031040_8_5_9"/>
<dbReference type="Proteomes" id="UP000001823">
    <property type="component" value="Chromosome"/>
</dbReference>
<dbReference type="GO" id="GO:0005737">
    <property type="term" value="C:cytoplasm"/>
    <property type="evidence" value="ECO:0007669"/>
    <property type="project" value="TreeGrafter"/>
</dbReference>
<dbReference type="GO" id="GO:0033743">
    <property type="term" value="F:peptide-methionine (R)-S-oxide reductase activity"/>
    <property type="evidence" value="ECO:0007669"/>
    <property type="project" value="UniProtKB-UniRule"/>
</dbReference>
<dbReference type="GO" id="GO:0030091">
    <property type="term" value="P:protein repair"/>
    <property type="evidence" value="ECO:0007669"/>
    <property type="project" value="InterPro"/>
</dbReference>
<dbReference type="GO" id="GO:0006979">
    <property type="term" value="P:response to oxidative stress"/>
    <property type="evidence" value="ECO:0007669"/>
    <property type="project" value="InterPro"/>
</dbReference>
<dbReference type="FunFam" id="2.170.150.20:FF:000003">
    <property type="entry name" value="Peptide methionine sulfoxide reductase MsrB"/>
    <property type="match status" value="1"/>
</dbReference>
<dbReference type="Gene3D" id="2.170.150.20">
    <property type="entry name" value="Peptide methionine sulfoxide reductase"/>
    <property type="match status" value="1"/>
</dbReference>
<dbReference type="HAMAP" id="MF_01400">
    <property type="entry name" value="MsrB"/>
    <property type="match status" value="1"/>
</dbReference>
<dbReference type="InterPro" id="IPR028427">
    <property type="entry name" value="Met_Sox_Rdtase_MsrB"/>
</dbReference>
<dbReference type="InterPro" id="IPR002579">
    <property type="entry name" value="Met_Sox_Rdtase_MsrB_dom"/>
</dbReference>
<dbReference type="InterPro" id="IPR011057">
    <property type="entry name" value="Mss4-like_sf"/>
</dbReference>
<dbReference type="NCBIfam" id="TIGR00357">
    <property type="entry name" value="peptide-methionine (R)-S-oxide reductase MsrB"/>
    <property type="match status" value="1"/>
</dbReference>
<dbReference type="PANTHER" id="PTHR10173">
    <property type="entry name" value="METHIONINE SULFOXIDE REDUCTASE"/>
    <property type="match status" value="1"/>
</dbReference>
<dbReference type="PANTHER" id="PTHR10173:SF59">
    <property type="entry name" value="PEPTIDE METHIONINE SULFOXIDE REDUCTASE MSRA_MSRB"/>
    <property type="match status" value="1"/>
</dbReference>
<dbReference type="Pfam" id="PF01641">
    <property type="entry name" value="SelR"/>
    <property type="match status" value="1"/>
</dbReference>
<dbReference type="SUPFAM" id="SSF51316">
    <property type="entry name" value="Mss4-like"/>
    <property type="match status" value="1"/>
</dbReference>
<dbReference type="PROSITE" id="PS51790">
    <property type="entry name" value="MSRB"/>
    <property type="match status" value="1"/>
</dbReference>
<name>MSRB_CLOP1</name>
<gene>
    <name evidence="1" type="primary">msrB</name>
    <name type="ordered locus">CPF_1860</name>
</gene>
<sequence>MKYTKKEKEELKKVLTEEEYYVTQENGTERPFTNEYWDFNGEGIYVDITTGEPLFTSKDKFHSSCGWPAFSKPIDRSIIKEKVDKSHGMIRTEVRSKLGDSHLGHVFCDGPEELGGLRYCINSASLKFIPKEELKEKGYEEYLELFK</sequence>
<keyword id="KW-0560">Oxidoreductase</keyword>
<protein>
    <recommendedName>
        <fullName evidence="1">Peptide methionine sulfoxide reductase MsrB</fullName>
        <ecNumber evidence="1">1.8.4.12</ecNumber>
    </recommendedName>
    <alternativeName>
        <fullName evidence="1">Peptide-methionine (R)-S-oxide reductase</fullName>
    </alternativeName>
</protein>
<proteinExistence type="inferred from homology"/>
<evidence type="ECO:0000255" key="1">
    <source>
        <dbReference type="HAMAP-Rule" id="MF_01400"/>
    </source>
</evidence>
<evidence type="ECO:0000255" key="2">
    <source>
        <dbReference type="PROSITE-ProRule" id="PRU01126"/>
    </source>
</evidence>
<comment type="catalytic activity">
    <reaction evidence="1">
        <text>L-methionyl-[protein] + [thioredoxin]-disulfide + H2O = L-methionyl-(R)-S-oxide-[protein] + [thioredoxin]-dithiol</text>
        <dbReference type="Rhea" id="RHEA:24164"/>
        <dbReference type="Rhea" id="RHEA-COMP:10698"/>
        <dbReference type="Rhea" id="RHEA-COMP:10700"/>
        <dbReference type="Rhea" id="RHEA-COMP:12313"/>
        <dbReference type="Rhea" id="RHEA-COMP:12314"/>
        <dbReference type="ChEBI" id="CHEBI:15377"/>
        <dbReference type="ChEBI" id="CHEBI:16044"/>
        <dbReference type="ChEBI" id="CHEBI:29950"/>
        <dbReference type="ChEBI" id="CHEBI:45764"/>
        <dbReference type="ChEBI" id="CHEBI:50058"/>
        <dbReference type="EC" id="1.8.4.12"/>
    </reaction>
</comment>
<comment type="similarity">
    <text evidence="1">Belongs to the MsrB Met sulfoxide reductase family.</text>
</comment>